<reference key="1">
    <citation type="journal article" date="1989" name="J. Bacteriol.">
        <title>Analysis of the transcriptional unit encoding the genes for rubredoxin (rub) and a putative rubredoxin oxidoreductase (rbo) in Desulfovibrio vulgaris Hildenborough.</title>
        <authorList>
            <person name="Brumlik M.J."/>
            <person name="Voordouw G."/>
        </authorList>
    </citation>
    <scope>NUCLEOTIDE SEQUENCE [GENOMIC DNA]</scope>
</reference>
<reference key="2">
    <citation type="journal article" date="1988" name="Gene">
        <title>Cloning of genes encoding redox proteins of known amino acid sequence from a library of the Desulfovibrio vulgaris (Hildenborough) genome.</title>
        <authorList>
            <person name="Voordouw G."/>
        </authorList>
    </citation>
    <scope>NUCLEOTIDE SEQUENCE [GENOMIC DNA]</scope>
</reference>
<reference key="3">
    <citation type="journal article" date="1976" name="Biochim. Biophys. Acta">
        <title>Non-heme iron proteins. The amino acid sequence of rubredoxin from Desulfovibrio vulgaris.</title>
        <authorList>
            <person name="Bruschi M."/>
        </authorList>
    </citation>
    <scope>PROTEIN SEQUENCE</scope>
</reference>
<reference key="4">
    <citation type="journal article" date="2004" name="Nat. Biotechnol.">
        <title>The genome sequence of the anaerobic, sulfate-reducing bacterium Desulfovibrio vulgaris Hildenborough.</title>
        <authorList>
            <person name="Heidelberg J.F."/>
            <person name="Seshadri R."/>
            <person name="Haveman S.A."/>
            <person name="Hemme C.L."/>
            <person name="Paulsen I.T."/>
            <person name="Kolonay J.F."/>
            <person name="Eisen J.A."/>
            <person name="Ward N.L."/>
            <person name="Methe B.A."/>
            <person name="Brinkac L.M."/>
            <person name="Daugherty S.C."/>
            <person name="DeBoy R.T."/>
            <person name="Dodson R.J."/>
            <person name="Durkin A.S."/>
            <person name="Madupu R."/>
            <person name="Nelson W.C."/>
            <person name="Sullivan S.A."/>
            <person name="Fouts D.E."/>
            <person name="Haft D.H."/>
            <person name="Selengut J."/>
            <person name="Peterson J.D."/>
            <person name="Davidsen T.M."/>
            <person name="Zafar N."/>
            <person name="Zhou L."/>
            <person name="Radune D."/>
            <person name="Dimitrov G."/>
            <person name="Hance M."/>
            <person name="Tran K."/>
            <person name="Khouri H.M."/>
            <person name="Gill J."/>
            <person name="Utterback T.R."/>
            <person name="Feldblyum T.V."/>
            <person name="Wall J.D."/>
            <person name="Voordouw G."/>
            <person name="Fraser C.M."/>
        </authorList>
    </citation>
    <scope>NUCLEOTIDE SEQUENCE [LARGE SCALE GENOMIC DNA]</scope>
    <source>
        <strain>ATCC 29579 / DSM 644 / CCUG 34227 / NCIMB 8303 / VKM B-1760 / Hildenborough</strain>
    </source>
</reference>
<reference key="5">
    <citation type="journal article" date="1977" name="J. Mol. Biol.">
        <title>A structural model of rubredoxin from Desulfovibrio vulgaris at 2-A resolution.</title>
        <authorList>
            <person name="Adman E.T."/>
            <person name="Sieker L.C."/>
            <person name="Jensen L.H."/>
            <person name="Bruschi M."/>
            <person name="le Gall J."/>
        </authorList>
    </citation>
    <scope>X-RAY CRYSTALLOGRAPHY (2 ANGSTROMS)</scope>
</reference>
<reference key="6">
    <citation type="journal article" date="1991" name="J. Mol. Biol.">
        <title>Structure of rubredoxin from Desulfovibrio vulgaris at 1.5-A resolution.</title>
        <authorList>
            <person name="Adman E.T."/>
            <person name="Seiker L.C."/>
            <person name="Jensen L.H."/>
        </authorList>
    </citation>
    <scope>X-RAY CRYSTALLOGRAPHY (1.5 ANGSTROMS)</scope>
</reference>
<reference key="7">
    <citation type="submission" date="1997-12" db="PDB data bank">
        <authorList>
            <person name="Dauter Z."/>
            <person name="Butterworth S."/>
            <person name="Sieker L.C."/>
            <person name="Sheldrick G."/>
            <person name="Wilson K.S."/>
        </authorList>
    </citation>
    <scope>X-RAY CRYSTALLOGRAPHY (0.92 ANGSTROMS)</scope>
</reference>
<comment type="function">
    <text>Rubredoxin is a small nonheme, iron protein lacking acid-labile sulfide. Its single Fe, chelated to 4 Cys, functions as an electron acceptor and may also stabilize the conformation of the molecule.</text>
</comment>
<comment type="function">
    <text>Electron acceptor for cytoplasmic lactate dehydrogenase.</text>
</comment>
<comment type="cofactor">
    <cofactor>
        <name>Fe(3+)</name>
        <dbReference type="ChEBI" id="CHEBI:29034"/>
    </cofactor>
    <text>Binds 1 Fe(3+) ion per subunit.</text>
</comment>
<comment type="subcellular location">
    <subcellularLocation>
        <location>Cytoplasm</location>
    </subcellularLocation>
</comment>
<comment type="similarity">
    <text evidence="3">Belongs to the rubredoxin family.</text>
</comment>
<dbReference type="EMBL" id="M28848">
    <property type="protein sequence ID" value="AAA64798.1"/>
    <property type="molecule type" value="Genomic_DNA"/>
</dbReference>
<dbReference type="EMBL" id="M21679">
    <property type="protein sequence ID" value="AAA21088.1"/>
    <property type="molecule type" value="Genomic_DNA"/>
</dbReference>
<dbReference type="EMBL" id="M81168">
    <property type="protein sequence ID" value="AAA23381.1"/>
    <property type="molecule type" value="Genomic_DNA"/>
</dbReference>
<dbReference type="EMBL" id="AE017285">
    <property type="protein sequence ID" value="AAS97654.1"/>
    <property type="molecule type" value="Genomic_DNA"/>
</dbReference>
<dbReference type="PIR" id="B33962">
    <property type="entry name" value="RUDV"/>
</dbReference>
<dbReference type="RefSeq" id="WP_010940442.1">
    <property type="nucleotide sequence ID" value="NC_002937.3"/>
</dbReference>
<dbReference type="RefSeq" id="YP_012394.1">
    <property type="nucleotide sequence ID" value="NC_002937.3"/>
</dbReference>
<dbReference type="PDB" id="1RB9">
    <property type="method" value="X-ray"/>
    <property type="resolution" value="0.92 A"/>
    <property type="chains" value="A=1-52"/>
</dbReference>
<dbReference type="PDB" id="2KKD">
    <property type="method" value="NMR"/>
    <property type="chains" value="A=1-52"/>
</dbReference>
<dbReference type="PDB" id="2QL0">
    <property type="method" value="NMR"/>
    <property type="chains" value="A=1-52"/>
</dbReference>
<dbReference type="PDB" id="7RXN">
    <property type="method" value="X-ray"/>
    <property type="resolution" value="1.50 A"/>
    <property type="chains" value="A=1-52"/>
</dbReference>
<dbReference type="PDB" id="8RXN">
    <property type="method" value="X-ray"/>
    <property type="resolution" value="1.00 A"/>
    <property type="chains" value="A=1-52"/>
</dbReference>
<dbReference type="PDBsum" id="1RB9"/>
<dbReference type="PDBsum" id="2KKD"/>
<dbReference type="PDBsum" id="2QL0"/>
<dbReference type="PDBsum" id="7RXN"/>
<dbReference type="PDBsum" id="8RXN"/>
<dbReference type="BMRB" id="P00269"/>
<dbReference type="SMR" id="P00269"/>
<dbReference type="STRING" id="882.DVU_3184"/>
<dbReference type="DrugBank" id="DB04464">
    <property type="generic name" value="N-Formylmethionine"/>
</dbReference>
<dbReference type="PaxDb" id="882-DVU_3184"/>
<dbReference type="EnsemblBacteria" id="AAS97654">
    <property type="protein sequence ID" value="AAS97654"/>
    <property type="gene ID" value="DVU_3184"/>
</dbReference>
<dbReference type="KEGG" id="dvu:DVU_3184"/>
<dbReference type="PATRIC" id="fig|882.5.peg.2889"/>
<dbReference type="eggNOG" id="COG1773">
    <property type="taxonomic scope" value="Bacteria"/>
</dbReference>
<dbReference type="HOGENOM" id="CLU_128747_3_3_7"/>
<dbReference type="OrthoDB" id="9808980at2"/>
<dbReference type="PhylomeDB" id="P00269"/>
<dbReference type="EvolutionaryTrace" id="P00269"/>
<dbReference type="Proteomes" id="UP000002194">
    <property type="component" value="Chromosome"/>
</dbReference>
<dbReference type="GO" id="GO:0005737">
    <property type="term" value="C:cytoplasm"/>
    <property type="evidence" value="ECO:0007669"/>
    <property type="project" value="UniProtKB-SubCell"/>
</dbReference>
<dbReference type="GO" id="GO:0009055">
    <property type="term" value="F:electron transfer activity"/>
    <property type="evidence" value="ECO:0007669"/>
    <property type="project" value="InterPro"/>
</dbReference>
<dbReference type="GO" id="GO:0005506">
    <property type="term" value="F:iron ion binding"/>
    <property type="evidence" value="ECO:0007669"/>
    <property type="project" value="InterPro"/>
</dbReference>
<dbReference type="GO" id="GO:0043448">
    <property type="term" value="P:alkane catabolic process"/>
    <property type="evidence" value="ECO:0007669"/>
    <property type="project" value="TreeGrafter"/>
</dbReference>
<dbReference type="CDD" id="cd00730">
    <property type="entry name" value="rubredoxin"/>
    <property type="match status" value="1"/>
</dbReference>
<dbReference type="FunFam" id="2.20.28.10:FF:000001">
    <property type="entry name" value="Rubredoxin"/>
    <property type="match status" value="1"/>
</dbReference>
<dbReference type="Gene3D" id="2.20.28.10">
    <property type="match status" value="1"/>
</dbReference>
<dbReference type="InterPro" id="IPR024922">
    <property type="entry name" value="Rubredoxin"/>
</dbReference>
<dbReference type="InterPro" id="IPR024934">
    <property type="entry name" value="Rubredoxin-like_dom"/>
</dbReference>
<dbReference type="InterPro" id="IPR024935">
    <property type="entry name" value="Rubredoxin_dom"/>
</dbReference>
<dbReference type="InterPro" id="IPR050526">
    <property type="entry name" value="Rubredoxin_ET"/>
</dbReference>
<dbReference type="InterPro" id="IPR018527">
    <property type="entry name" value="Rubredoxin_Fe_BS"/>
</dbReference>
<dbReference type="NCBIfam" id="NF045768">
    <property type="entry name" value="RubredRD"/>
    <property type="match status" value="1"/>
</dbReference>
<dbReference type="PANTHER" id="PTHR47627">
    <property type="entry name" value="RUBREDOXIN"/>
    <property type="match status" value="1"/>
</dbReference>
<dbReference type="PANTHER" id="PTHR47627:SF1">
    <property type="entry name" value="RUBREDOXIN-1-RELATED"/>
    <property type="match status" value="1"/>
</dbReference>
<dbReference type="Pfam" id="PF00301">
    <property type="entry name" value="Rubredoxin"/>
    <property type="match status" value="1"/>
</dbReference>
<dbReference type="PIRSF" id="PIRSF000071">
    <property type="entry name" value="Rubredoxin"/>
    <property type="match status" value="1"/>
</dbReference>
<dbReference type="PRINTS" id="PR00163">
    <property type="entry name" value="RUBREDOXIN"/>
</dbReference>
<dbReference type="SUPFAM" id="SSF57802">
    <property type="entry name" value="Rubredoxin-like"/>
    <property type="match status" value="1"/>
</dbReference>
<dbReference type="PROSITE" id="PS00202">
    <property type="entry name" value="RUBREDOXIN"/>
    <property type="match status" value="1"/>
</dbReference>
<dbReference type="PROSITE" id="PS50903">
    <property type="entry name" value="RUBREDOXIN_LIKE"/>
    <property type="match status" value="1"/>
</dbReference>
<accession>P00269</accession>
<keyword id="KW-0002">3D-structure</keyword>
<keyword id="KW-0963">Cytoplasm</keyword>
<keyword id="KW-0903">Direct protein sequencing</keyword>
<keyword id="KW-0249">Electron transport</keyword>
<keyword id="KW-0408">Iron</keyword>
<keyword id="KW-0479">Metal-binding</keyword>
<keyword id="KW-1185">Reference proteome</keyword>
<keyword id="KW-0813">Transport</keyword>
<name>RUBR_NITV2</name>
<feature type="chain" id="PRO_0000135038" description="Rubredoxin">
    <location>
        <begin position="1"/>
        <end position="52"/>
    </location>
</feature>
<feature type="domain" description="Rubredoxin-like" evidence="1">
    <location>
        <begin position="1"/>
        <end position="52"/>
    </location>
</feature>
<feature type="binding site" evidence="1 2">
    <location>
        <position position="6"/>
    </location>
    <ligand>
        <name>Fe cation</name>
        <dbReference type="ChEBI" id="CHEBI:24875"/>
    </ligand>
</feature>
<feature type="binding site" evidence="1 2">
    <location>
        <position position="9"/>
    </location>
    <ligand>
        <name>Fe cation</name>
        <dbReference type="ChEBI" id="CHEBI:24875"/>
    </ligand>
</feature>
<feature type="binding site" evidence="1 2">
    <location>
        <position position="39"/>
    </location>
    <ligand>
        <name>Fe cation</name>
        <dbReference type="ChEBI" id="CHEBI:24875"/>
    </ligand>
</feature>
<feature type="binding site" evidence="1 2">
    <location>
        <position position="42"/>
    </location>
    <ligand>
        <name>Fe cation</name>
        <dbReference type="ChEBI" id="CHEBI:24875"/>
    </ligand>
</feature>
<feature type="sequence conflict" description="In Ref. 2." evidence="3" ref="2">
    <original>D</original>
    <variation>T</variation>
    <location>
        <position position="21"/>
    </location>
</feature>
<feature type="strand" evidence="4">
    <location>
        <begin position="4"/>
        <end position="6"/>
    </location>
</feature>
<feature type="turn" evidence="4">
    <location>
        <begin position="7"/>
        <end position="9"/>
    </location>
</feature>
<feature type="turn" evidence="4">
    <location>
        <begin position="15"/>
        <end position="17"/>
    </location>
</feature>
<feature type="helix" evidence="4">
    <location>
        <begin position="20"/>
        <end position="22"/>
    </location>
</feature>
<feature type="helix" evidence="4">
    <location>
        <begin position="30"/>
        <end position="32"/>
    </location>
</feature>
<feature type="turn" evidence="4">
    <location>
        <begin position="40"/>
        <end position="42"/>
    </location>
</feature>
<feature type="helix" evidence="4">
    <location>
        <begin position="46"/>
        <end position="48"/>
    </location>
</feature>
<feature type="strand" evidence="4">
    <location>
        <begin position="49"/>
        <end position="51"/>
    </location>
</feature>
<gene>
    <name type="primary">rub</name>
    <name type="ordered locus">DVU_3184</name>
</gene>
<evidence type="ECO:0000255" key="1">
    <source>
        <dbReference type="PROSITE-ProRule" id="PRU00241"/>
    </source>
</evidence>
<evidence type="ECO:0000269" key="2">
    <source>
    </source>
</evidence>
<evidence type="ECO:0000305" key="3"/>
<evidence type="ECO:0007829" key="4">
    <source>
        <dbReference type="PDB" id="1RB9"/>
    </source>
</evidence>
<proteinExistence type="evidence at protein level"/>
<protein>
    <recommendedName>
        <fullName>Rubredoxin</fullName>
        <shortName>Rd</shortName>
    </recommendedName>
</protein>
<sequence length="52" mass="5574">MKKYVCTVCGYEYDPAEGDPDNGVKPGTSFDDLPADWVCPVCGAPKSEFEAA</sequence>
<organism>
    <name type="scientific">Nitratidesulfovibrio vulgaris (strain ATCC 29579 / DSM 644 / CCUG 34227 / NCIMB 8303 / VKM B-1760 / Hildenborough)</name>
    <name type="common">Desulfovibrio vulgaris</name>
    <dbReference type="NCBI Taxonomy" id="882"/>
    <lineage>
        <taxon>Bacteria</taxon>
        <taxon>Pseudomonadati</taxon>
        <taxon>Thermodesulfobacteriota</taxon>
        <taxon>Desulfovibrionia</taxon>
        <taxon>Desulfovibrionales</taxon>
        <taxon>Desulfovibrionaceae</taxon>
        <taxon>Nitratidesulfovibrio</taxon>
    </lineage>
</organism>